<sequence>MAAKEVLFGNDARVKMLAGVNILANAVKVTLGPKGRNVVLDKSFGAPLITKDGVSVAKEIELEDKFENMGAQMVKEVASKANDAAGDGTTTATVLAQAIVTEGLKAVAAGMNPMDLKRGIDKAVVAAVAELKNLSQECSDTKAIAQVGTISANSDESIGEIIATAMERVGKEGVITVEEGQALENELDVVEGMQFDRGYLSPYFINKPETGSVELESPFILLVDKKVSNIRELLPILEGLAKTGKPLLIVAEDVEGEALATLVVNNMRGIVKVAAVKAPGFGDRRKAMLQDIAILTGGTVIAEEIGLELEKATLEDLGTAKRVIITKDDTTIIDGNGEETQIKARVAQIKIQAEESTSDYDKEKLQERMAKLAGGVAVIKVGAATEVEMKEKKARVEDALHATRAAVEEGVVAGGGVALVRVASKIGELDVINEDQKHGVIIALRAMEAPLRQIAANAGEEGSVVANNVKNGTGNYGYNAGNDTYGDMLEMGILDPTKVTRSALQFASSIAGLMITTECMVAEVKEDAADMGGMGGMGGMGGMGGMM</sequence>
<comment type="function">
    <text evidence="1">Together with its co-chaperonin GroES, plays an essential role in assisting protein folding. The GroEL-GroES system forms a nano-cage that allows encapsulation of the non-native substrate proteins and provides a physical environment optimized to promote and accelerate protein folding.</text>
</comment>
<comment type="catalytic activity">
    <reaction evidence="1">
        <text>ATP + H2O + a folded polypeptide = ADP + phosphate + an unfolded polypeptide.</text>
        <dbReference type="EC" id="5.6.1.7"/>
    </reaction>
</comment>
<comment type="subunit">
    <text evidence="1">Forms a cylinder of 14 subunits composed of two heptameric rings stacked back-to-back. Interacts with the co-chaperonin GroES.</text>
</comment>
<comment type="subcellular location">
    <subcellularLocation>
        <location evidence="1">Cytoplasm</location>
    </subcellularLocation>
</comment>
<comment type="similarity">
    <text evidence="1">Belongs to the chaperonin (HSP60) family.</text>
</comment>
<dbReference type="EC" id="5.6.1.7" evidence="1"/>
<dbReference type="EMBL" id="CP000851">
    <property type="protein sequence ID" value="ABV89000.1"/>
    <property type="molecule type" value="Genomic_DNA"/>
</dbReference>
<dbReference type="RefSeq" id="WP_012156884.1">
    <property type="nucleotide sequence ID" value="NC_009901.1"/>
</dbReference>
<dbReference type="SMR" id="A8H8W3"/>
<dbReference type="STRING" id="398579.Spea_3689"/>
<dbReference type="KEGG" id="spl:Spea_3689"/>
<dbReference type="eggNOG" id="COG0459">
    <property type="taxonomic scope" value="Bacteria"/>
</dbReference>
<dbReference type="HOGENOM" id="CLU_016503_3_0_6"/>
<dbReference type="OrthoDB" id="9766614at2"/>
<dbReference type="Proteomes" id="UP000002608">
    <property type="component" value="Chromosome"/>
</dbReference>
<dbReference type="GO" id="GO:0005737">
    <property type="term" value="C:cytoplasm"/>
    <property type="evidence" value="ECO:0007669"/>
    <property type="project" value="UniProtKB-SubCell"/>
</dbReference>
<dbReference type="GO" id="GO:0005524">
    <property type="term" value="F:ATP binding"/>
    <property type="evidence" value="ECO:0007669"/>
    <property type="project" value="UniProtKB-UniRule"/>
</dbReference>
<dbReference type="GO" id="GO:0140662">
    <property type="term" value="F:ATP-dependent protein folding chaperone"/>
    <property type="evidence" value="ECO:0007669"/>
    <property type="project" value="InterPro"/>
</dbReference>
<dbReference type="GO" id="GO:0016853">
    <property type="term" value="F:isomerase activity"/>
    <property type="evidence" value="ECO:0007669"/>
    <property type="project" value="UniProtKB-KW"/>
</dbReference>
<dbReference type="GO" id="GO:0051082">
    <property type="term" value="F:unfolded protein binding"/>
    <property type="evidence" value="ECO:0007669"/>
    <property type="project" value="UniProtKB-UniRule"/>
</dbReference>
<dbReference type="GO" id="GO:0042026">
    <property type="term" value="P:protein refolding"/>
    <property type="evidence" value="ECO:0007669"/>
    <property type="project" value="UniProtKB-UniRule"/>
</dbReference>
<dbReference type="CDD" id="cd03344">
    <property type="entry name" value="GroEL"/>
    <property type="match status" value="1"/>
</dbReference>
<dbReference type="FunFam" id="1.10.560.10:FF:000001">
    <property type="entry name" value="60 kDa chaperonin"/>
    <property type="match status" value="1"/>
</dbReference>
<dbReference type="FunFam" id="3.50.7.10:FF:000001">
    <property type="entry name" value="60 kDa chaperonin"/>
    <property type="match status" value="1"/>
</dbReference>
<dbReference type="Gene3D" id="3.50.7.10">
    <property type="entry name" value="GroEL"/>
    <property type="match status" value="1"/>
</dbReference>
<dbReference type="Gene3D" id="1.10.560.10">
    <property type="entry name" value="GroEL-like equatorial domain"/>
    <property type="match status" value="1"/>
</dbReference>
<dbReference type="Gene3D" id="3.30.260.10">
    <property type="entry name" value="TCP-1-like chaperonin intermediate domain"/>
    <property type="match status" value="1"/>
</dbReference>
<dbReference type="HAMAP" id="MF_00600">
    <property type="entry name" value="CH60"/>
    <property type="match status" value="1"/>
</dbReference>
<dbReference type="InterPro" id="IPR018370">
    <property type="entry name" value="Chaperonin_Cpn60_CS"/>
</dbReference>
<dbReference type="InterPro" id="IPR001844">
    <property type="entry name" value="Cpn60/GroEL"/>
</dbReference>
<dbReference type="InterPro" id="IPR002423">
    <property type="entry name" value="Cpn60/GroEL/TCP-1"/>
</dbReference>
<dbReference type="InterPro" id="IPR027409">
    <property type="entry name" value="GroEL-like_apical_dom_sf"/>
</dbReference>
<dbReference type="InterPro" id="IPR027413">
    <property type="entry name" value="GROEL-like_equatorial_sf"/>
</dbReference>
<dbReference type="InterPro" id="IPR027410">
    <property type="entry name" value="TCP-1-like_intermed_sf"/>
</dbReference>
<dbReference type="NCBIfam" id="TIGR02348">
    <property type="entry name" value="GroEL"/>
    <property type="match status" value="1"/>
</dbReference>
<dbReference type="NCBIfam" id="NF000592">
    <property type="entry name" value="PRK00013.1"/>
    <property type="match status" value="1"/>
</dbReference>
<dbReference type="NCBIfam" id="NF009487">
    <property type="entry name" value="PRK12849.1"/>
    <property type="match status" value="1"/>
</dbReference>
<dbReference type="NCBIfam" id="NF009488">
    <property type="entry name" value="PRK12850.1"/>
    <property type="match status" value="1"/>
</dbReference>
<dbReference type="NCBIfam" id="NF009489">
    <property type="entry name" value="PRK12851.1"/>
    <property type="match status" value="1"/>
</dbReference>
<dbReference type="PANTHER" id="PTHR45633">
    <property type="entry name" value="60 KDA HEAT SHOCK PROTEIN, MITOCHONDRIAL"/>
    <property type="match status" value="1"/>
</dbReference>
<dbReference type="Pfam" id="PF00118">
    <property type="entry name" value="Cpn60_TCP1"/>
    <property type="match status" value="1"/>
</dbReference>
<dbReference type="PRINTS" id="PR00298">
    <property type="entry name" value="CHAPERONIN60"/>
</dbReference>
<dbReference type="SUPFAM" id="SSF52029">
    <property type="entry name" value="GroEL apical domain-like"/>
    <property type="match status" value="1"/>
</dbReference>
<dbReference type="SUPFAM" id="SSF48592">
    <property type="entry name" value="GroEL equatorial domain-like"/>
    <property type="match status" value="1"/>
</dbReference>
<dbReference type="SUPFAM" id="SSF54849">
    <property type="entry name" value="GroEL-intermediate domain like"/>
    <property type="match status" value="1"/>
</dbReference>
<dbReference type="PROSITE" id="PS00296">
    <property type="entry name" value="CHAPERONINS_CPN60"/>
    <property type="match status" value="1"/>
</dbReference>
<protein>
    <recommendedName>
        <fullName evidence="1">Chaperonin GroEL</fullName>
        <ecNumber evidence="1">5.6.1.7</ecNumber>
    </recommendedName>
    <alternativeName>
        <fullName evidence="1">60 kDa chaperonin</fullName>
    </alternativeName>
    <alternativeName>
        <fullName evidence="1">Chaperonin-60</fullName>
        <shortName evidence="1">Cpn60</shortName>
    </alternativeName>
</protein>
<proteinExistence type="inferred from homology"/>
<reference key="1">
    <citation type="submission" date="2007-10" db="EMBL/GenBank/DDBJ databases">
        <title>Complete sequence of Shewanella pealeana ATCC 700345.</title>
        <authorList>
            <consortium name="US DOE Joint Genome Institute"/>
            <person name="Copeland A."/>
            <person name="Lucas S."/>
            <person name="Lapidus A."/>
            <person name="Barry K."/>
            <person name="Glavina del Rio T."/>
            <person name="Dalin E."/>
            <person name="Tice H."/>
            <person name="Pitluck S."/>
            <person name="Chertkov O."/>
            <person name="Brettin T."/>
            <person name="Bruce D."/>
            <person name="Detter J.C."/>
            <person name="Han C."/>
            <person name="Schmutz J."/>
            <person name="Larimer F."/>
            <person name="Land M."/>
            <person name="Hauser L."/>
            <person name="Kyrpides N."/>
            <person name="Kim E."/>
            <person name="Zhao J.-S.Z."/>
            <person name="Manno D."/>
            <person name="Hawari J."/>
            <person name="Richardson P."/>
        </authorList>
    </citation>
    <scope>NUCLEOTIDE SEQUENCE [LARGE SCALE GENOMIC DNA]</scope>
    <source>
        <strain>ATCC 700345 / ANG-SQ1</strain>
    </source>
</reference>
<gene>
    <name evidence="1" type="primary">groEL</name>
    <name evidence="1" type="synonym">groL</name>
    <name type="ordered locus">Spea_3689</name>
</gene>
<feature type="chain" id="PRO_1000082489" description="Chaperonin GroEL">
    <location>
        <begin position="1"/>
        <end position="547"/>
    </location>
</feature>
<feature type="binding site" evidence="1">
    <location>
        <begin position="30"/>
        <end position="33"/>
    </location>
    <ligand>
        <name>ATP</name>
        <dbReference type="ChEBI" id="CHEBI:30616"/>
    </ligand>
</feature>
<feature type="binding site" evidence="1">
    <location>
        <position position="51"/>
    </location>
    <ligand>
        <name>ATP</name>
        <dbReference type="ChEBI" id="CHEBI:30616"/>
    </ligand>
</feature>
<feature type="binding site" evidence="1">
    <location>
        <begin position="87"/>
        <end position="91"/>
    </location>
    <ligand>
        <name>ATP</name>
        <dbReference type="ChEBI" id="CHEBI:30616"/>
    </ligand>
</feature>
<feature type="binding site" evidence="1">
    <location>
        <position position="415"/>
    </location>
    <ligand>
        <name>ATP</name>
        <dbReference type="ChEBI" id="CHEBI:30616"/>
    </ligand>
</feature>
<feature type="binding site" evidence="1">
    <location>
        <position position="495"/>
    </location>
    <ligand>
        <name>ATP</name>
        <dbReference type="ChEBI" id="CHEBI:30616"/>
    </ligand>
</feature>
<evidence type="ECO:0000255" key="1">
    <source>
        <dbReference type="HAMAP-Rule" id="MF_00600"/>
    </source>
</evidence>
<keyword id="KW-0067">ATP-binding</keyword>
<keyword id="KW-0143">Chaperone</keyword>
<keyword id="KW-0963">Cytoplasm</keyword>
<keyword id="KW-0413">Isomerase</keyword>
<keyword id="KW-0547">Nucleotide-binding</keyword>
<keyword id="KW-1185">Reference proteome</keyword>
<accession>A8H8W3</accession>
<organism>
    <name type="scientific">Shewanella pealeana (strain ATCC 700345 / ANG-SQ1)</name>
    <dbReference type="NCBI Taxonomy" id="398579"/>
    <lineage>
        <taxon>Bacteria</taxon>
        <taxon>Pseudomonadati</taxon>
        <taxon>Pseudomonadota</taxon>
        <taxon>Gammaproteobacteria</taxon>
        <taxon>Alteromonadales</taxon>
        <taxon>Shewanellaceae</taxon>
        <taxon>Shewanella</taxon>
    </lineage>
</organism>
<name>CH60_SHEPA</name>